<comment type="function">
    <text evidence="1">Component of the cytochrome b6-f complex, which mediates electron transfer between photosystem II (PSII) and photosystem I (PSI), cyclic electron flow around PSI, and state transitions.</text>
</comment>
<comment type="cofactor">
    <cofactor evidence="1">
        <name>heme b</name>
        <dbReference type="ChEBI" id="CHEBI:60344"/>
    </cofactor>
    <text evidence="1">Binds 2 heme b groups non-covalently with two histidine residues as axial ligands.</text>
</comment>
<comment type="cofactor">
    <cofactor evidence="1">
        <name>heme c</name>
        <dbReference type="ChEBI" id="CHEBI:61717"/>
    </cofactor>
    <text evidence="1">Binds one heme group covalently by a single cysteine link with no axial amino acid ligand. This heme was named heme ci.</text>
</comment>
<comment type="subunit">
    <text evidence="1">The 4 large subunits of the cytochrome b6-f complex are cytochrome b6, subunit IV (17 kDa polypeptide, PetD), cytochrome f and the Rieske protein, while the 4 small subunits are PetG, PetL, PetM and PetN. The complex functions as a dimer.</text>
</comment>
<comment type="subcellular location">
    <subcellularLocation>
        <location evidence="1">Cellular thylakoid membrane</location>
        <topology evidence="1">Multi-pass membrane protein</topology>
    </subcellularLocation>
</comment>
<comment type="miscellaneous">
    <text evidence="1">Heme 1 (or BH or b566) is high-potential and absorbs at about 566 nm, and heme 2 (or BL or b562) is low-potential and absorbs at about 562 nm.</text>
</comment>
<comment type="similarity">
    <text evidence="1">Belongs to the cytochrome b family. PetB subfamily.</text>
</comment>
<proteinExistence type="inferred from homology"/>
<organism>
    <name type="scientific">Prochlorococcus marinus (strain NATL1A)</name>
    <dbReference type="NCBI Taxonomy" id="167555"/>
    <lineage>
        <taxon>Bacteria</taxon>
        <taxon>Bacillati</taxon>
        <taxon>Cyanobacteriota</taxon>
        <taxon>Cyanophyceae</taxon>
        <taxon>Synechococcales</taxon>
        <taxon>Prochlorococcaceae</taxon>
        <taxon>Prochlorococcus</taxon>
    </lineage>
</organism>
<protein>
    <recommendedName>
        <fullName evidence="1">Cytochrome b6</fullName>
    </recommendedName>
</protein>
<name>CYB6_PROM1</name>
<keyword id="KW-0249">Electron transport</keyword>
<keyword id="KW-0349">Heme</keyword>
<keyword id="KW-0408">Iron</keyword>
<keyword id="KW-0472">Membrane</keyword>
<keyword id="KW-0479">Metal-binding</keyword>
<keyword id="KW-0602">Photosynthesis</keyword>
<keyword id="KW-0793">Thylakoid</keyword>
<keyword id="KW-0812">Transmembrane</keyword>
<keyword id="KW-1133">Transmembrane helix</keyword>
<keyword id="KW-0813">Transport</keyword>
<sequence length="218" mass="24656">MANSSPVYDWFQERLEIQDIADDVTSKYVPPHVNIFYCLGGITLVCFLIQFATGFAMTFYYKPTVTEAYSSVSYLMTDVSFGWLIRSVHRWSASMMVLMLILHVFRVYLTGGFKRPRELTWITGVVMAVITVAFGVTGYSLPWDQVGYWAVKIVSGVPAAIPVIGDFMVELLRGGESVGQSTLTRFYSLHTFVMPWLLAVFMLMHFLMIRKQGISGPL</sequence>
<reference key="1">
    <citation type="journal article" date="2007" name="PLoS Genet.">
        <title>Patterns and implications of gene gain and loss in the evolution of Prochlorococcus.</title>
        <authorList>
            <person name="Kettler G.C."/>
            <person name="Martiny A.C."/>
            <person name="Huang K."/>
            <person name="Zucker J."/>
            <person name="Coleman M.L."/>
            <person name="Rodrigue S."/>
            <person name="Chen F."/>
            <person name="Lapidus A."/>
            <person name="Ferriera S."/>
            <person name="Johnson J."/>
            <person name="Steglich C."/>
            <person name="Church G.M."/>
            <person name="Richardson P."/>
            <person name="Chisholm S.W."/>
        </authorList>
    </citation>
    <scope>NUCLEOTIDE SEQUENCE [LARGE SCALE GENOMIC DNA]</scope>
    <source>
        <strain>NATL1A</strain>
    </source>
</reference>
<gene>
    <name evidence="1" type="primary">petB</name>
    <name type="ordered locus">NATL1_04171</name>
</gene>
<dbReference type="EMBL" id="CP000553">
    <property type="protein sequence ID" value="ABM74981.1"/>
    <property type="molecule type" value="Genomic_DNA"/>
</dbReference>
<dbReference type="RefSeq" id="WP_011294336.1">
    <property type="nucleotide sequence ID" value="NC_008819.1"/>
</dbReference>
<dbReference type="SMR" id="A2C0H1"/>
<dbReference type="KEGG" id="pme:NATL1_04171"/>
<dbReference type="eggNOG" id="COG1290">
    <property type="taxonomic scope" value="Bacteria"/>
</dbReference>
<dbReference type="HOGENOM" id="CLU_031114_0_2_3"/>
<dbReference type="Proteomes" id="UP000002592">
    <property type="component" value="Chromosome"/>
</dbReference>
<dbReference type="GO" id="GO:0031676">
    <property type="term" value="C:plasma membrane-derived thylakoid membrane"/>
    <property type="evidence" value="ECO:0007669"/>
    <property type="project" value="UniProtKB-SubCell"/>
</dbReference>
<dbReference type="GO" id="GO:0045158">
    <property type="term" value="F:electron transporter, transferring electrons within cytochrome b6/f complex of photosystem II activity"/>
    <property type="evidence" value="ECO:0007669"/>
    <property type="project" value="UniProtKB-UniRule"/>
</dbReference>
<dbReference type="GO" id="GO:0046872">
    <property type="term" value="F:metal ion binding"/>
    <property type="evidence" value="ECO:0007669"/>
    <property type="project" value="UniProtKB-KW"/>
</dbReference>
<dbReference type="GO" id="GO:0016491">
    <property type="term" value="F:oxidoreductase activity"/>
    <property type="evidence" value="ECO:0007669"/>
    <property type="project" value="InterPro"/>
</dbReference>
<dbReference type="GO" id="GO:0015979">
    <property type="term" value="P:photosynthesis"/>
    <property type="evidence" value="ECO:0007669"/>
    <property type="project" value="UniProtKB-UniRule"/>
</dbReference>
<dbReference type="GO" id="GO:0022904">
    <property type="term" value="P:respiratory electron transport chain"/>
    <property type="evidence" value="ECO:0007669"/>
    <property type="project" value="InterPro"/>
</dbReference>
<dbReference type="CDD" id="cd00284">
    <property type="entry name" value="Cytochrome_b_N"/>
    <property type="match status" value="1"/>
</dbReference>
<dbReference type="FunFam" id="1.20.810.10:FF:000001">
    <property type="entry name" value="Cytochrome b6"/>
    <property type="match status" value="1"/>
</dbReference>
<dbReference type="Gene3D" id="1.20.810.10">
    <property type="entry name" value="Cytochrome Bc1 Complex, Chain C"/>
    <property type="match status" value="1"/>
</dbReference>
<dbReference type="HAMAP" id="MF_00633">
    <property type="entry name" value="Cytb6_f_cytb6"/>
    <property type="match status" value="1"/>
</dbReference>
<dbReference type="InterPro" id="IPR005797">
    <property type="entry name" value="Cyt_b/b6_N"/>
</dbReference>
<dbReference type="InterPro" id="IPR023530">
    <property type="entry name" value="Cyt_B6_PetB"/>
</dbReference>
<dbReference type="InterPro" id="IPR027387">
    <property type="entry name" value="Cytb/b6-like_sf"/>
</dbReference>
<dbReference type="InterPro" id="IPR048259">
    <property type="entry name" value="Cytochrome_b_N_euk/bac"/>
</dbReference>
<dbReference type="InterPro" id="IPR016174">
    <property type="entry name" value="Di-haem_cyt_TM"/>
</dbReference>
<dbReference type="NCBIfam" id="NF002990">
    <property type="entry name" value="PRK03735.1"/>
    <property type="match status" value="1"/>
</dbReference>
<dbReference type="PANTHER" id="PTHR19271">
    <property type="entry name" value="CYTOCHROME B"/>
    <property type="match status" value="1"/>
</dbReference>
<dbReference type="PANTHER" id="PTHR19271:SF16">
    <property type="entry name" value="CYTOCHROME B"/>
    <property type="match status" value="1"/>
</dbReference>
<dbReference type="Pfam" id="PF00033">
    <property type="entry name" value="Cytochrome_B"/>
    <property type="match status" value="1"/>
</dbReference>
<dbReference type="PIRSF" id="PIRSF000032">
    <property type="entry name" value="Cytochrome_b6"/>
    <property type="match status" value="1"/>
</dbReference>
<dbReference type="SUPFAM" id="SSF81342">
    <property type="entry name" value="Transmembrane di-heme cytochromes"/>
    <property type="match status" value="1"/>
</dbReference>
<dbReference type="PROSITE" id="PS51002">
    <property type="entry name" value="CYTB_NTER"/>
    <property type="match status" value="1"/>
</dbReference>
<feature type="chain" id="PRO_1000061408" description="Cytochrome b6">
    <location>
        <begin position="1"/>
        <end position="218"/>
    </location>
</feature>
<feature type="transmembrane region" description="Helical" evidence="1">
    <location>
        <begin position="35"/>
        <end position="55"/>
    </location>
</feature>
<feature type="transmembrane region" description="Helical" evidence="1">
    <location>
        <begin position="93"/>
        <end position="113"/>
    </location>
</feature>
<feature type="transmembrane region" description="Helical" evidence="1">
    <location>
        <begin position="119"/>
        <end position="139"/>
    </location>
</feature>
<feature type="transmembrane region" description="Helical" evidence="1">
    <location>
        <begin position="189"/>
        <end position="209"/>
    </location>
</feature>
<feature type="binding site" description="covalent" evidence="1">
    <location>
        <position position="38"/>
    </location>
    <ligand>
        <name>heme c</name>
        <dbReference type="ChEBI" id="CHEBI:61717"/>
    </ligand>
</feature>
<feature type="binding site" description="axial binding residue" evidence="1">
    <location>
        <position position="89"/>
    </location>
    <ligand>
        <name>heme b</name>
        <dbReference type="ChEBI" id="CHEBI:60344"/>
        <label>2</label>
    </ligand>
    <ligandPart>
        <name>Fe</name>
        <dbReference type="ChEBI" id="CHEBI:18248"/>
    </ligandPart>
</feature>
<feature type="binding site" description="axial binding residue" evidence="1">
    <location>
        <position position="103"/>
    </location>
    <ligand>
        <name>heme b</name>
        <dbReference type="ChEBI" id="CHEBI:60344"/>
        <label>1</label>
    </ligand>
    <ligandPart>
        <name>Fe</name>
        <dbReference type="ChEBI" id="CHEBI:18248"/>
    </ligandPart>
</feature>
<feature type="binding site" description="axial binding residue" evidence="1">
    <location>
        <position position="190"/>
    </location>
    <ligand>
        <name>heme b</name>
        <dbReference type="ChEBI" id="CHEBI:60344"/>
        <label>2</label>
    </ligand>
    <ligandPart>
        <name>Fe</name>
        <dbReference type="ChEBI" id="CHEBI:18248"/>
    </ligandPart>
</feature>
<feature type="binding site" description="axial binding residue" evidence="1">
    <location>
        <position position="205"/>
    </location>
    <ligand>
        <name>heme b</name>
        <dbReference type="ChEBI" id="CHEBI:60344"/>
        <label>1</label>
    </ligand>
    <ligandPart>
        <name>Fe</name>
        <dbReference type="ChEBI" id="CHEBI:18248"/>
    </ligandPart>
</feature>
<evidence type="ECO:0000255" key="1">
    <source>
        <dbReference type="HAMAP-Rule" id="MF_00633"/>
    </source>
</evidence>
<accession>A2C0H1</accession>